<sequence length="82" mass="9664">MPKRTLQGVVVSDKQDKTVVVRVDRRFTHPIYKKTIRRSKNYHAHDENNEFKAGDTVWIVESKPLSKLKRWTVVQSEKEKTA</sequence>
<evidence type="ECO:0000255" key="1">
    <source>
        <dbReference type="HAMAP-Rule" id="MF_01345"/>
    </source>
</evidence>
<evidence type="ECO:0000305" key="2"/>
<keyword id="KW-1185">Reference proteome</keyword>
<keyword id="KW-0687">Ribonucleoprotein</keyword>
<keyword id="KW-0689">Ribosomal protein</keyword>
<keyword id="KW-0694">RNA-binding</keyword>
<keyword id="KW-0699">rRNA-binding</keyword>
<feature type="chain" id="PRO_1000143278" description="Small ribosomal subunit protein uS17">
    <location>
        <begin position="1"/>
        <end position="82"/>
    </location>
</feature>
<gene>
    <name evidence="1" type="primary">rpsQ</name>
    <name type="ordered locus">OCAR_5686</name>
    <name type="ordered locus">OCA5_c23210</name>
</gene>
<reference key="1">
    <citation type="journal article" date="2008" name="J. Bacteriol.">
        <title>Genome sequence of the chemolithoautotrophic bacterium Oligotropha carboxidovorans OM5T.</title>
        <authorList>
            <person name="Paul D."/>
            <person name="Bridges S."/>
            <person name="Burgess S.C."/>
            <person name="Dandass Y."/>
            <person name="Lawrence M.L."/>
        </authorList>
    </citation>
    <scope>NUCLEOTIDE SEQUENCE [LARGE SCALE GENOMIC DNA]</scope>
    <source>
        <strain>ATCC 49405 / DSM 1227 / KCTC 32145 / OM5</strain>
    </source>
</reference>
<reference key="2">
    <citation type="journal article" date="2011" name="J. Bacteriol.">
        <title>Complete genome sequences of the chemolithoautotrophic Oligotropha carboxidovorans strains OM4 and OM5.</title>
        <authorList>
            <person name="Volland S."/>
            <person name="Rachinger M."/>
            <person name="Strittmatter A."/>
            <person name="Daniel R."/>
            <person name="Gottschalk G."/>
            <person name="Meyer O."/>
        </authorList>
    </citation>
    <scope>NUCLEOTIDE SEQUENCE [LARGE SCALE GENOMIC DNA]</scope>
    <source>
        <strain>ATCC 49405 / DSM 1227 / KCTC 32145 / OM5</strain>
    </source>
</reference>
<comment type="function">
    <text evidence="1">One of the primary rRNA binding proteins, it binds specifically to the 5'-end of 16S ribosomal RNA.</text>
</comment>
<comment type="subunit">
    <text evidence="1">Part of the 30S ribosomal subunit.</text>
</comment>
<comment type="similarity">
    <text evidence="1">Belongs to the universal ribosomal protein uS17 family.</text>
</comment>
<name>RS17_AFIC5</name>
<proteinExistence type="inferred from homology"/>
<accession>B6JEU2</accession>
<accession>F8BZB8</accession>
<protein>
    <recommendedName>
        <fullName evidence="1">Small ribosomal subunit protein uS17</fullName>
    </recommendedName>
    <alternativeName>
        <fullName evidence="2">30S ribosomal protein S17</fullName>
    </alternativeName>
</protein>
<organism>
    <name type="scientific">Afipia carboxidovorans (strain ATCC 49405 / DSM 1227 / KCTC 32145 / OM5)</name>
    <name type="common">Oligotropha carboxidovorans</name>
    <dbReference type="NCBI Taxonomy" id="504832"/>
    <lineage>
        <taxon>Bacteria</taxon>
        <taxon>Pseudomonadati</taxon>
        <taxon>Pseudomonadota</taxon>
        <taxon>Alphaproteobacteria</taxon>
        <taxon>Hyphomicrobiales</taxon>
        <taxon>Nitrobacteraceae</taxon>
        <taxon>Afipia</taxon>
    </lineage>
</organism>
<dbReference type="EMBL" id="CP001196">
    <property type="protein sequence ID" value="ACI92814.1"/>
    <property type="molecule type" value="Genomic_DNA"/>
</dbReference>
<dbReference type="EMBL" id="CP002826">
    <property type="protein sequence ID" value="AEI07021.1"/>
    <property type="molecule type" value="Genomic_DNA"/>
</dbReference>
<dbReference type="RefSeq" id="WP_012562843.1">
    <property type="nucleotide sequence ID" value="NC_015684.1"/>
</dbReference>
<dbReference type="SMR" id="B6JEU2"/>
<dbReference type="STRING" id="504832.OCA5_c23210"/>
<dbReference type="KEGG" id="oca:OCAR_5686"/>
<dbReference type="KEGG" id="ocg:OCA5_c23210"/>
<dbReference type="PATRIC" id="fig|504832.7.peg.2446"/>
<dbReference type="eggNOG" id="COG0186">
    <property type="taxonomic scope" value="Bacteria"/>
</dbReference>
<dbReference type="HOGENOM" id="CLU_073626_1_1_5"/>
<dbReference type="OrthoDB" id="9811714at2"/>
<dbReference type="Proteomes" id="UP000007730">
    <property type="component" value="Chromosome"/>
</dbReference>
<dbReference type="GO" id="GO:0022627">
    <property type="term" value="C:cytosolic small ribosomal subunit"/>
    <property type="evidence" value="ECO:0007669"/>
    <property type="project" value="TreeGrafter"/>
</dbReference>
<dbReference type="GO" id="GO:0019843">
    <property type="term" value="F:rRNA binding"/>
    <property type="evidence" value="ECO:0007669"/>
    <property type="project" value="UniProtKB-UniRule"/>
</dbReference>
<dbReference type="GO" id="GO:0003735">
    <property type="term" value="F:structural constituent of ribosome"/>
    <property type="evidence" value="ECO:0007669"/>
    <property type="project" value="InterPro"/>
</dbReference>
<dbReference type="GO" id="GO:0006412">
    <property type="term" value="P:translation"/>
    <property type="evidence" value="ECO:0007669"/>
    <property type="project" value="UniProtKB-UniRule"/>
</dbReference>
<dbReference type="CDD" id="cd00364">
    <property type="entry name" value="Ribosomal_uS17"/>
    <property type="match status" value="1"/>
</dbReference>
<dbReference type="FunFam" id="2.40.50.140:FF:000204">
    <property type="entry name" value="30S ribosomal protein S17"/>
    <property type="match status" value="1"/>
</dbReference>
<dbReference type="Gene3D" id="2.40.50.140">
    <property type="entry name" value="Nucleic acid-binding proteins"/>
    <property type="match status" value="1"/>
</dbReference>
<dbReference type="HAMAP" id="MF_01345_B">
    <property type="entry name" value="Ribosomal_uS17_B"/>
    <property type="match status" value="1"/>
</dbReference>
<dbReference type="InterPro" id="IPR012340">
    <property type="entry name" value="NA-bd_OB-fold"/>
</dbReference>
<dbReference type="InterPro" id="IPR000266">
    <property type="entry name" value="Ribosomal_uS17"/>
</dbReference>
<dbReference type="InterPro" id="IPR019984">
    <property type="entry name" value="Ribosomal_uS17_bact/chlr"/>
</dbReference>
<dbReference type="InterPro" id="IPR019979">
    <property type="entry name" value="Ribosomal_uS17_CS"/>
</dbReference>
<dbReference type="NCBIfam" id="NF004123">
    <property type="entry name" value="PRK05610.1"/>
    <property type="match status" value="1"/>
</dbReference>
<dbReference type="NCBIfam" id="TIGR03635">
    <property type="entry name" value="uS17_bact"/>
    <property type="match status" value="1"/>
</dbReference>
<dbReference type="PANTHER" id="PTHR10744">
    <property type="entry name" value="40S RIBOSOMAL PROTEIN S11 FAMILY MEMBER"/>
    <property type="match status" value="1"/>
</dbReference>
<dbReference type="PANTHER" id="PTHR10744:SF1">
    <property type="entry name" value="SMALL RIBOSOMAL SUBUNIT PROTEIN US17M"/>
    <property type="match status" value="1"/>
</dbReference>
<dbReference type="Pfam" id="PF00366">
    <property type="entry name" value="Ribosomal_S17"/>
    <property type="match status" value="1"/>
</dbReference>
<dbReference type="PRINTS" id="PR00973">
    <property type="entry name" value="RIBOSOMALS17"/>
</dbReference>
<dbReference type="SUPFAM" id="SSF50249">
    <property type="entry name" value="Nucleic acid-binding proteins"/>
    <property type="match status" value="1"/>
</dbReference>
<dbReference type="PROSITE" id="PS00056">
    <property type="entry name" value="RIBOSOMAL_S17"/>
    <property type="match status" value="1"/>
</dbReference>